<organism>
    <name type="scientific">Burkholderia orbicola (strain AU 1054)</name>
    <dbReference type="NCBI Taxonomy" id="331271"/>
    <lineage>
        <taxon>Bacteria</taxon>
        <taxon>Pseudomonadati</taxon>
        <taxon>Pseudomonadota</taxon>
        <taxon>Betaproteobacteria</taxon>
        <taxon>Burkholderiales</taxon>
        <taxon>Burkholderiaceae</taxon>
        <taxon>Burkholderia</taxon>
        <taxon>Burkholderia cepacia complex</taxon>
        <taxon>Burkholderia orbicola</taxon>
    </lineage>
</organism>
<name>RS17_BURO1</name>
<comment type="function">
    <text evidence="1">One of the primary rRNA binding proteins, it binds specifically to the 5'-end of 16S ribosomal RNA.</text>
</comment>
<comment type="subunit">
    <text evidence="1">Part of the 30S ribosomal subunit.</text>
</comment>
<comment type="similarity">
    <text evidence="1">Belongs to the universal ribosomal protein uS17 family.</text>
</comment>
<dbReference type="EMBL" id="CP000378">
    <property type="protein sequence ID" value="ABF77648.1"/>
    <property type="molecule type" value="Genomic_DNA"/>
</dbReference>
<dbReference type="SMR" id="Q1BRV7"/>
<dbReference type="HOGENOM" id="CLU_073626_1_1_4"/>
<dbReference type="GO" id="GO:0022627">
    <property type="term" value="C:cytosolic small ribosomal subunit"/>
    <property type="evidence" value="ECO:0007669"/>
    <property type="project" value="TreeGrafter"/>
</dbReference>
<dbReference type="GO" id="GO:0019843">
    <property type="term" value="F:rRNA binding"/>
    <property type="evidence" value="ECO:0007669"/>
    <property type="project" value="UniProtKB-UniRule"/>
</dbReference>
<dbReference type="GO" id="GO:0003735">
    <property type="term" value="F:structural constituent of ribosome"/>
    <property type="evidence" value="ECO:0007669"/>
    <property type="project" value="InterPro"/>
</dbReference>
<dbReference type="GO" id="GO:0006412">
    <property type="term" value="P:translation"/>
    <property type="evidence" value="ECO:0007669"/>
    <property type="project" value="UniProtKB-UniRule"/>
</dbReference>
<dbReference type="CDD" id="cd00364">
    <property type="entry name" value="Ribosomal_uS17"/>
    <property type="match status" value="1"/>
</dbReference>
<dbReference type="Gene3D" id="2.40.50.140">
    <property type="entry name" value="Nucleic acid-binding proteins"/>
    <property type="match status" value="1"/>
</dbReference>
<dbReference type="HAMAP" id="MF_01345_B">
    <property type="entry name" value="Ribosomal_uS17_B"/>
    <property type="match status" value="1"/>
</dbReference>
<dbReference type="InterPro" id="IPR012340">
    <property type="entry name" value="NA-bd_OB-fold"/>
</dbReference>
<dbReference type="InterPro" id="IPR000266">
    <property type="entry name" value="Ribosomal_uS17"/>
</dbReference>
<dbReference type="InterPro" id="IPR019984">
    <property type="entry name" value="Ribosomal_uS17_bact/chlr"/>
</dbReference>
<dbReference type="InterPro" id="IPR019979">
    <property type="entry name" value="Ribosomal_uS17_CS"/>
</dbReference>
<dbReference type="NCBIfam" id="NF004123">
    <property type="entry name" value="PRK05610.1"/>
    <property type="match status" value="1"/>
</dbReference>
<dbReference type="NCBIfam" id="TIGR03635">
    <property type="entry name" value="uS17_bact"/>
    <property type="match status" value="1"/>
</dbReference>
<dbReference type="PANTHER" id="PTHR10744">
    <property type="entry name" value="40S RIBOSOMAL PROTEIN S11 FAMILY MEMBER"/>
    <property type="match status" value="1"/>
</dbReference>
<dbReference type="PANTHER" id="PTHR10744:SF1">
    <property type="entry name" value="SMALL RIBOSOMAL SUBUNIT PROTEIN US17M"/>
    <property type="match status" value="1"/>
</dbReference>
<dbReference type="Pfam" id="PF00366">
    <property type="entry name" value="Ribosomal_S17"/>
    <property type="match status" value="1"/>
</dbReference>
<dbReference type="PRINTS" id="PR00973">
    <property type="entry name" value="RIBOSOMALS17"/>
</dbReference>
<dbReference type="SUPFAM" id="SSF50249">
    <property type="entry name" value="Nucleic acid-binding proteins"/>
    <property type="match status" value="1"/>
</dbReference>
<dbReference type="PROSITE" id="PS00056">
    <property type="entry name" value="RIBOSOMAL_S17"/>
    <property type="match status" value="1"/>
</dbReference>
<accession>Q1BRV7</accession>
<gene>
    <name evidence="1" type="primary">rpsQ</name>
    <name type="ordered locus">Bcen_2750</name>
</gene>
<protein>
    <recommendedName>
        <fullName evidence="1">Small ribosomal subunit protein uS17</fullName>
    </recommendedName>
    <alternativeName>
        <fullName evidence="2">30S ribosomal protein S17</fullName>
    </alternativeName>
</protein>
<reference key="1">
    <citation type="submission" date="2006-05" db="EMBL/GenBank/DDBJ databases">
        <title>Complete sequence of chromosome 1 of Burkholderia cenocepacia AU 1054.</title>
        <authorList>
            <consortium name="US DOE Joint Genome Institute"/>
            <person name="Copeland A."/>
            <person name="Lucas S."/>
            <person name="Lapidus A."/>
            <person name="Barry K."/>
            <person name="Detter J.C."/>
            <person name="Glavina del Rio T."/>
            <person name="Hammon N."/>
            <person name="Israni S."/>
            <person name="Dalin E."/>
            <person name="Tice H."/>
            <person name="Pitluck S."/>
            <person name="Chain P."/>
            <person name="Malfatti S."/>
            <person name="Shin M."/>
            <person name="Vergez L."/>
            <person name="Schmutz J."/>
            <person name="Larimer F."/>
            <person name="Land M."/>
            <person name="Hauser L."/>
            <person name="Kyrpides N."/>
            <person name="Lykidis A."/>
            <person name="LiPuma J.J."/>
            <person name="Konstantinidis K."/>
            <person name="Tiedje J.M."/>
            <person name="Richardson P."/>
        </authorList>
    </citation>
    <scope>NUCLEOTIDE SEQUENCE [LARGE SCALE GENOMIC DNA]</scope>
    <source>
        <strain>AU 1054</strain>
    </source>
</reference>
<evidence type="ECO:0000255" key="1">
    <source>
        <dbReference type="HAMAP-Rule" id="MF_01345"/>
    </source>
</evidence>
<evidence type="ECO:0000305" key="2"/>
<sequence>MNDSVKTSLKRTLVGRVVSNKMDKTVTVLIEHRVKHPIYGKYVVRSKKYHAHDEANTYNEGDLVEIQETRPVSKTKAWTVSRLVEAARVI</sequence>
<keyword id="KW-0687">Ribonucleoprotein</keyword>
<keyword id="KW-0689">Ribosomal protein</keyword>
<keyword id="KW-0694">RNA-binding</keyword>
<keyword id="KW-0699">rRNA-binding</keyword>
<feature type="chain" id="PRO_0000255667" description="Small ribosomal subunit protein uS17">
    <location>
        <begin position="1"/>
        <end position="90"/>
    </location>
</feature>
<proteinExistence type="inferred from homology"/>